<accession>A8E1C4</accession>
<evidence type="ECO:0000255" key="1">
    <source>
        <dbReference type="HAMAP-Rule" id="MF_04044"/>
    </source>
</evidence>
<evidence type="ECO:0000256" key="2">
    <source>
        <dbReference type="SAM" id="MobiDB-lite"/>
    </source>
</evidence>
<evidence type="ECO:0000269" key="3">
    <source>
    </source>
</evidence>
<comment type="function">
    <text evidence="1 3">Large tegument protein that plays multiple roles in the viral cycle. During viral entry, remains associated with the capsid while most of the tegument is detached and participates in the capsid transport toward the host nucleus. Plays a role in the routing of the capsid at the nuclear pore complex and subsequent uncoating. Within the host nucleus, acts as a deneddylase and promotes the degradation of nuclear CRLs (cullin-RING ubiquitin ligases) and thereby stabilizes nuclear CRL substrates, while cytoplasmic CRLs remain unaffected. These modifications prevent host cell cycle S-phase progression and create a favorable environment allowing efficient viral genome replication. Participates later in the secondary envelopment of capsids. Indeed, plays a linker role for the association of the outer viral tegument to the capsids together with the inner tegument protein.</text>
</comment>
<comment type="catalytic activity">
    <reaction evidence="1">
        <text>Thiol-dependent hydrolysis of ester, thioester, amide, peptide and isopeptide bonds formed by the C-terminal Gly of ubiquitin (a 76-residue protein attached to proteins as an intracellular targeting signal).</text>
        <dbReference type="EC" id="3.4.19.12"/>
    </reaction>
</comment>
<comment type="subunit">
    <text evidence="1">Interacts with host CUL1 and CUL4A; these interactions inhibit the E3 ligase activity of cullins. Interacts with inner tegument protein. Interacts with capsid vertex specific component CVC2. Interacts with the major capsid protein/MCP.</text>
</comment>
<comment type="subcellular location">
    <subcellularLocation>
        <location evidence="1">Virion tegument</location>
    </subcellularLocation>
    <subcellularLocation>
        <location evidence="1">Host cytoplasm</location>
    </subcellularLocation>
    <subcellularLocation>
        <location evidence="1">Host nucleus</location>
    </subcellularLocation>
    <text evidence="1">Tightly associated with the capsid.</text>
</comment>
<comment type="similarity">
    <text evidence="1">Belongs to the herpesviridae large tegument protein family.</text>
</comment>
<keyword id="KW-1035">Host cytoplasm</keyword>
<keyword id="KW-1048">Host nucleus</keyword>
<keyword id="KW-0945">Host-virus interaction</keyword>
<keyword id="KW-0378">Hydrolase</keyword>
<keyword id="KW-1127">Modulation of host ubiquitin pathway by viral deubiquitinase</keyword>
<keyword id="KW-1130">Modulation of host ubiquitin pathway by virus</keyword>
<keyword id="KW-0645">Protease</keyword>
<keyword id="KW-1185">Reference proteome</keyword>
<keyword id="KW-0677">Repeat</keyword>
<keyword id="KW-0788">Thiol protease</keyword>
<keyword id="KW-0833">Ubl conjugation pathway</keyword>
<keyword id="KW-0946">Virion</keyword>
<keyword id="KW-0920">Virion tegument</keyword>
<organismHost>
    <name type="scientific">Mus musculus</name>
    <name type="common">Mouse</name>
    <dbReference type="NCBI Taxonomy" id="10090"/>
</organismHost>
<sequence>MKIVRASRDQSAPVYGPRAGSQCMSNCFTFLHTCYLMGIDPVLDTTSLDAVLDSGARLDAIADEKVKRQALTDHPYRLGTEIPTVIETPAGITGHALSRPFNGTAETQDLGGYKCLGILDFLTYARGKPLPVYIIVTVGVHTRGVIVARGATYVFDPHTTDLSAEAAVYVCDDFTEAISALSFFGAMIGDFYYDAVLVYFTRCRTTLISPSELLVQIMDQYKDPDIDASVMSGSGGGGPSISSSAASASASVSPLPSGAASDGVTNGAGAQTSSKSGKKRRAPDVPPQQKGTAKTLRRSRRPIRLPERLSEVIVEDVQTIEHFRTATQSLPVKPPQEWTMYCGEEPFYRQYFVDVGRQLLAHAIDTYVSLDKTTDESAVQRFESLMGLSDELDAVIAAARATELSAPPLYKTYLSQRVSASAVTRTDRLLASKILALFEEGSATDFETVSSWLRELLQQLPVENTTTTEAKIAAFVAQHPIPGERAFVCLRNSQVKSLGELLSVKRETLKVKYMENDATYRKILDAISKLGLASNAAAAIQSADTSHLDSEQLASLAQAAEAYAQSAYESCQAKMTELLSTNHNRILTGSLPDSDIAAVLAAFKAVSENVRALREVELLKSQVHVQLAQLTEDLLYLQTAEVKLEVTPSAEIKKLRAEYETARKQISDEEMRIKELIENMEDMITDSSSSPPPPEMLDMLRTQIEEVESMTVDEQDARRADKVLGKLSTLDEAEAKATEFAQSLSTVNIPSLNEIKGVKMLKSVLETNADLRRAYVQAVTGMLENALKQLAEGNLPSDDMMSRITALAEQLPTGRQVRADLLDSTDIVSQMSRRLRYAANQKNSTQSLEDVLNFFSENDDMIRKLLKTSWGKPVATVYRRVQVEYDRKMEELRESEWLKRVKETDIDSPQTLERLLKTAPNETILAKHAPDMHARLKKRMQSEAEKRTADMKRLYEEMRKKVDTDLKVVSDSFSSQTPSMFSSIDLKSCGTSLVRLTKEDRKAAIATFNANLTKSLNSLLASLVTVETATIAAILKGADPEATSSTGSAGGGADRQKHTSTLENNISTLLGWQQKVLLPETERDLLTIAHLLTALTHMRKNWRNPAAAFSSTPHTAAYRNFAELANEIESRRTETLARYKSKYAELNASIHDNTKANDVTIKPEDTFTAAFRDTVKAMAAPFSTELQARLQARENELKDELSDLNVKLKTKLERYLAKRSSQDARWRDLITQHRIRLPEGLDVDTNRLRTDTVVTLNGIIRSAATTLPYITAKRGLEWTTEFILAAIEEKKDADPGMFAQLATLLDNSQAIARKIEEKIVYNTKVEAEMLETAPEHTRESLSNLQLMLGQLEAKRVVGGEARYKILSDAILTKQNKLAFAEDLEKLSARYFELARDIRSSKYGLDFDAQLLKTSLLKSEIGQHKKDPPSTGEEVGLPEESTTAAKISISSLLLGIAALEKYIVAHRTLLDNFVSSQPLISQAENIPALVGGPGEDDKPGQEPFDWTRIDLSRLSACDVSTALYRGTDVFGERRVMTARGIQLYLYATHGNFVFEAFSHVRGTKGLLSSSSGGGNGSGASSRQKDQQNATVTRRYRSVTVLASIAATLQTFWSEISRYDIRELLVESGRDPESAADQRDRRLNTVMNLKLFVYVMTVAWSEATPPVEPGSPEATHALEVSLLDFSTLMAALHPEYVYAITTQPVDATLRGLIARLDRRTVDAAMNTQENPPPYDMRELKAFCLDTKQWTQEDIRPQMWMSDLVKQICTSHPRNRDASTSTKLFLYMLATKVLPRDILRCLWVQFRPAYASSIASLEELVSALCDSFFKIYGTTSETVSARLKTGEKVERQVVLRHKPTMSLLDEFSQQEAVLDYILGSYVFAIPMTVGIHVTNIVNGRYRLIVRHLENLPSDPDFVKVVRSRDLSFDRFGWSYTVQNPVERSWFSLQEDRLRHLLTNPPQQDRTPLVVYDSNTNYAVNAMMPPLKAPPATSRVHLTVKNPFSTMRMIPHEDEGDDAATSETPFTSLPINIDFLRRDPPRLKRASGDSSSSVPAEDRDPDARPQDSVPDQSLSEPLFSQTKVSSIVPKDAVTTLSNESISQTFQIHPFRALSSAIMAAIEILQETRLQLDTFESDMCEAIRRIKILYLH</sequence>
<gene>
    <name type="primary">M48</name>
</gene>
<organism>
    <name type="scientific">Murid herpesvirus 1 (strain K181)</name>
    <name type="common">MuHV-1</name>
    <name type="synonym">Mouse cytomegalovirus</name>
    <dbReference type="NCBI Taxonomy" id="69156"/>
    <lineage>
        <taxon>Viruses</taxon>
        <taxon>Duplodnaviria</taxon>
        <taxon>Heunggongvirae</taxon>
        <taxon>Peploviricota</taxon>
        <taxon>Herviviricetes</taxon>
        <taxon>Herpesvirales</taxon>
        <taxon>Orthoherpesviridae</taxon>
        <taxon>Betaherpesvirinae</taxon>
        <taxon>Muromegalovirus</taxon>
        <taxon>Muromegalovirus muridbeta1</taxon>
        <taxon>Murid herpesvirus 1</taxon>
    </lineage>
</organism>
<proteinExistence type="inferred from homology"/>
<name>LTP_MUHVK</name>
<protein>
    <recommendedName>
        <fullName evidence="1">Large tegument protein deneddylase</fullName>
        <ecNumber evidence="1">3.4.19.12</ecNumber>
        <ecNumber evidence="1">3.4.22.-</ecNumber>
    </recommendedName>
</protein>
<reference key="1">
    <citation type="journal article" date="2008" name="J. Virol.">
        <title>Laboratory strains of murine cytomegalovirus are genetically similar to but phenotypically distinct from wild strains of virus.</title>
        <authorList>
            <person name="Smith L.M."/>
            <person name="McWhorter A.R."/>
            <person name="Masters L.L."/>
            <person name="Shellam G.R."/>
            <person name="Redwood A.J."/>
        </authorList>
    </citation>
    <scope>NUCLEOTIDE SEQUENCE [LARGE SCALE GENOMIC DNA]</scope>
    <source>
        <strain>K181</strain>
    </source>
</reference>
<reference key="2">
    <citation type="journal article" date="2005" name="J. Virol.">
        <title>Use of a murine cytomegalovirus K181-derived bacterial artificial chromosome as a vaccine vector for immunocontraception.</title>
        <authorList>
            <person name="Redwood A.J."/>
            <person name="Messerle M."/>
            <person name="Harvey N.L."/>
            <person name="Hardy C.M."/>
            <person name="Kozinowski U.H."/>
            <person name="Lawson M.A."/>
            <person name="Shellam G.R."/>
        </authorList>
    </citation>
    <scope>NUCLEOTIDE SEQUENCE [LARGE SCALE GENOMIC DNA]</scope>
    <source>
        <strain>K181</strain>
    </source>
</reference>
<reference key="3">
    <citation type="journal article" date="2010" name="Nat. Cell Biol.">
        <title>A deneddylase encoded by Epstein-Barr virus promotes viral DNA replication by regulating the activity of cullin-RING ligases.</title>
        <authorList>
            <person name="Gastaldello S."/>
            <person name="Hildebrand S."/>
            <person name="Faridani O."/>
            <person name="Callegari S."/>
            <person name="Palmkvist M."/>
            <person name="Di Guglielmo C."/>
            <person name="Masucci M.G."/>
        </authorList>
    </citation>
    <scope>FUNCTION</scope>
</reference>
<feature type="chain" id="PRO_0000396954" description="Large tegument protein deneddylase">
    <location>
        <begin position="1"/>
        <end position="2147"/>
    </location>
</feature>
<feature type="domain" description="Peptidase C76" evidence="1">
    <location>
        <begin position="3"/>
        <end position="223"/>
    </location>
</feature>
<feature type="region of interest" description="Deubiquitination activity" evidence="1">
    <location>
        <begin position="1"/>
        <end position="233"/>
    </location>
</feature>
<feature type="region of interest" description="Disordered" evidence="2">
    <location>
        <begin position="228"/>
        <end position="301"/>
    </location>
</feature>
<feature type="region of interest" description="Interaction with inner tegument protein" evidence="1">
    <location>
        <position position="292"/>
    </location>
</feature>
<feature type="region of interest" description="Disordered" evidence="2">
    <location>
        <begin position="1419"/>
        <end position="1438"/>
    </location>
</feature>
<feature type="region of interest" description="Disordered" evidence="2">
    <location>
        <begin position="1567"/>
        <end position="1589"/>
    </location>
</feature>
<feature type="region of interest" description="Disordered" evidence="2">
    <location>
        <begin position="2034"/>
        <end position="2072"/>
    </location>
</feature>
<feature type="compositionally biased region" description="Low complexity" evidence="2">
    <location>
        <begin position="240"/>
        <end position="261"/>
    </location>
</feature>
<feature type="compositionally biased region" description="Basic and acidic residues" evidence="2">
    <location>
        <begin position="2052"/>
        <end position="2061"/>
    </location>
</feature>
<feature type="active site" evidence="1">
    <location>
        <position position="23"/>
    </location>
</feature>
<feature type="active site" evidence="1">
    <location>
        <position position="156"/>
    </location>
</feature>
<feature type="active site" evidence="1">
    <location>
        <position position="158"/>
    </location>
</feature>
<feature type="site" description="Important for catalytic activity" evidence="1">
    <location>
        <position position="10"/>
    </location>
</feature>
<dbReference type="EC" id="3.4.19.12" evidence="1"/>
<dbReference type="EC" id="3.4.22.-" evidence="1"/>
<dbReference type="EMBL" id="AM886412">
    <property type="protein sequence ID" value="CAP08095.1"/>
    <property type="molecule type" value="Genomic_DNA"/>
</dbReference>
<dbReference type="SMR" id="A8E1C4"/>
<dbReference type="IntAct" id="A8E1C4">
    <property type="interactions" value="29"/>
</dbReference>
<dbReference type="Proteomes" id="UP000158680">
    <property type="component" value="Segment"/>
</dbReference>
<dbReference type="GO" id="GO:0030430">
    <property type="term" value="C:host cell cytoplasm"/>
    <property type="evidence" value="ECO:0007669"/>
    <property type="project" value="UniProtKB-SubCell"/>
</dbReference>
<dbReference type="GO" id="GO:0042025">
    <property type="term" value="C:host cell nucleus"/>
    <property type="evidence" value="ECO:0007669"/>
    <property type="project" value="UniProtKB-SubCell"/>
</dbReference>
<dbReference type="GO" id="GO:0019033">
    <property type="term" value="C:viral tegument"/>
    <property type="evidence" value="ECO:0007669"/>
    <property type="project" value="UniProtKB-SubCell"/>
</dbReference>
<dbReference type="GO" id="GO:0004843">
    <property type="term" value="F:cysteine-type deubiquitinase activity"/>
    <property type="evidence" value="ECO:0007669"/>
    <property type="project" value="UniProtKB-EC"/>
</dbReference>
<dbReference type="GO" id="GO:0006508">
    <property type="term" value="P:proteolysis"/>
    <property type="evidence" value="ECO:0007669"/>
    <property type="project" value="UniProtKB-KW"/>
</dbReference>
<dbReference type="GO" id="GO:0039648">
    <property type="term" value="P:symbiont-mediated perturbation of host ubiquitin-like protein modification"/>
    <property type="evidence" value="ECO:0007669"/>
    <property type="project" value="UniProtKB-KW"/>
</dbReference>
<dbReference type="Gene3D" id="3.90.70.120">
    <property type="match status" value="1"/>
</dbReference>
<dbReference type="HAMAP" id="MF_04044">
    <property type="entry name" value="HSV_LTP"/>
    <property type="match status" value="1"/>
</dbReference>
<dbReference type="InterPro" id="IPR006928">
    <property type="entry name" value="Herpes_teg_USP"/>
</dbReference>
<dbReference type="InterPro" id="IPR034702">
    <property type="entry name" value="HSV_LTP"/>
</dbReference>
<dbReference type="InterPro" id="IPR038765">
    <property type="entry name" value="Papain-like_cys_pep_sf"/>
</dbReference>
<dbReference type="Pfam" id="PF04843">
    <property type="entry name" value="Herpes_teg_N"/>
    <property type="match status" value="1"/>
</dbReference>
<dbReference type="SUPFAM" id="SSF54001">
    <property type="entry name" value="Cysteine proteinases"/>
    <property type="match status" value="1"/>
</dbReference>
<dbReference type="PROSITE" id="PS51521">
    <property type="entry name" value="HTUSP"/>
    <property type="match status" value="1"/>
</dbReference>